<comment type="function">
    <text evidence="1">Binds to 23S rRNA. Forms part of two intersubunit bridges in the 70S ribosome.</text>
</comment>
<comment type="subunit">
    <text evidence="1">Part of the 50S ribosomal subunit. Forms a cluster with proteins L3 and L19. In the 70S ribosome, L14 and L19 interact and together make contacts with the 16S rRNA in bridges B5 and B8.</text>
</comment>
<comment type="similarity">
    <text evidence="1">Belongs to the universal ribosomal protein uL14 family.</text>
</comment>
<keyword id="KW-1185">Reference proteome</keyword>
<keyword id="KW-0687">Ribonucleoprotein</keyword>
<keyword id="KW-0689">Ribosomal protein</keyword>
<keyword id="KW-0694">RNA-binding</keyword>
<keyword id="KW-0699">rRNA-binding</keyword>
<sequence>MIQQESVVKVADNSGAKRALVIRVLGGTRRRYAGLGDRVIVAVKDALPNGTVKKSDVAKAVVVRTVKETRRKDGSYIRFDENAVVIINDNGEPKATRIFGPVARELREKRYMKIVSLAPEVL</sequence>
<evidence type="ECO:0000255" key="1">
    <source>
        <dbReference type="HAMAP-Rule" id="MF_01367"/>
    </source>
</evidence>
<evidence type="ECO:0000305" key="2"/>
<proteinExistence type="inferred from homology"/>
<reference key="1">
    <citation type="submission" date="2006-03" db="EMBL/GenBank/DDBJ databases">
        <title>Complete genome sequence of Gemmatimonas aurantiaca T-27 that represents a novel phylum Gemmatimonadetes.</title>
        <authorList>
            <person name="Takasaki K."/>
            <person name="Ichikawa N."/>
            <person name="Miura H."/>
            <person name="Matsushita S."/>
            <person name="Watanabe Y."/>
            <person name="Oguchi A."/>
            <person name="Ankai A."/>
            <person name="Yashiro I."/>
            <person name="Takahashi M."/>
            <person name="Terui Y."/>
            <person name="Fukui S."/>
            <person name="Yokoyama H."/>
            <person name="Tanikawa S."/>
            <person name="Hanada S."/>
            <person name="Kamagata Y."/>
            <person name="Fujita N."/>
        </authorList>
    </citation>
    <scope>NUCLEOTIDE SEQUENCE [LARGE SCALE GENOMIC DNA]</scope>
    <source>
        <strain>DSM 14586 / JCM 11422 / NBRC 100505 / T-27</strain>
    </source>
</reference>
<organism>
    <name type="scientific">Gemmatimonas aurantiaca (strain DSM 14586 / JCM 11422 / NBRC 100505 / T-27)</name>
    <dbReference type="NCBI Taxonomy" id="379066"/>
    <lineage>
        <taxon>Bacteria</taxon>
        <taxon>Pseudomonadati</taxon>
        <taxon>Gemmatimonadota</taxon>
        <taxon>Gemmatimonadia</taxon>
        <taxon>Gemmatimonadales</taxon>
        <taxon>Gemmatimonadaceae</taxon>
        <taxon>Gemmatimonas</taxon>
    </lineage>
</organism>
<name>RL14_GEMAT</name>
<gene>
    <name evidence="1" type="primary">rplN</name>
    <name type="ordered locus">GAU_0883</name>
</gene>
<protein>
    <recommendedName>
        <fullName evidence="1">Large ribosomal subunit protein uL14</fullName>
    </recommendedName>
    <alternativeName>
        <fullName evidence="2">50S ribosomal protein L14</fullName>
    </alternativeName>
</protein>
<dbReference type="EMBL" id="AP009153">
    <property type="protein sequence ID" value="BAH37925.1"/>
    <property type="molecule type" value="Genomic_DNA"/>
</dbReference>
<dbReference type="RefSeq" id="WP_012682372.1">
    <property type="nucleotide sequence ID" value="NC_012489.1"/>
</dbReference>
<dbReference type="SMR" id="C1A6R5"/>
<dbReference type="STRING" id="379066.GAU_0883"/>
<dbReference type="KEGG" id="gau:GAU_0883"/>
<dbReference type="eggNOG" id="COG0093">
    <property type="taxonomic scope" value="Bacteria"/>
</dbReference>
<dbReference type="HOGENOM" id="CLU_095071_2_1_0"/>
<dbReference type="OrthoDB" id="9806379at2"/>
<dbReference type="Proteomes" id="UP000002209">
    <property type="component" value="Chromosome"/>
</dbReference>
<dbReference type="GO" id="GO:0022625">
    <property type="term" value="C:cytosolic large ribosomal subunit"/>
    <property type="evidence" value="ECO:0007669"/>
    <property type="project" value="TreeGrafter"/>
</dbReference>
<dbReference type="GO" id="GO:0070180">
    <property type="term" value="F:large ribosomal subunit rRNA binding"/>
    <property type="evidence" value="ECO:0007669"/>
    <property type="project" value="TreeGrafter"/>
</dbReference>
<dbReference type="GO" id="GO:0003735">
    <property type="term" value="F:structural constituent of ribosome"/>
    <property type="evidence" value="ECO:0007669"/>
    <property type="project" value="InterPro"/>
</dbReference>
<dbReference type="GO" id="GO:0006412">
    <property type="term" value="P:translation"/>
    <property type="evidence" value="ECO:0007669"/>
    <property type="project" value="UniProtKB-UniRule"/>
</dbReference>
<dbReference type="CDD" id="cd00337">
    <property type="entry name" value="Ribosomal_uL14"/>
    <property type="match status" value="1"/>
</dbReference>
<dbReference type="FunFam" id="2.40.150.20:FF:000001">
    <property type="entry name" value="50S ribosomal protein L14"/>
    <property type="match status" value="1"/>
</dbReference>
<dbReference type="Gene3D" id="2.40.150.20">
    <property type="entry name" value="Ribosomal protein L14"/>
    <property type="match status" value="1"/>
</dbReference>
<dbReference type="HAMAP" id="MF_01367">
    <property type="entry name" value="Ribosomal_uL14"/>
    <property type="match status" value="1"/>
</dbReference>
<dbReference type="InterPro" id="IPR000218">
    <property type="entry name" value="Ribosomal_uL14"/>
</dbReference>
<dbReference type="InterPro" id="IPR005745">
    <property type="entry name" value="Ribosomal_uL14_bac-type"/>
</dbReference>
<dbReference type="InterPro" id="IPR019972">
    <property type="entry name" value="Ribosomal_uL14_CS"/>
</dbReference>
<dbReference type="InterPro" id="IPR036853">
    <property type="entry name" value="Ribosomal_uL14_sf"/>
</dbReference>
<dbReference type="NCBIfam" id="TIGR01067">
    <property type="entry name" value="rplN_bact"/>
    <property type="match status" value="1"/>
</dbReference>
<dbReference type="PANTHER" id="PTHR11761">
    <property type="entry name" value="50S/60S RIBOSOMAL PROTEIN L14/L23"/>
    <property type="match status" value="1"/>
</dbReference>
<dbReference type="PANTHER" id="PTHR11761:SF3">
    <property type="entry name" value="LARGE RIBOSOMAL SUBUNIT PROTEIN UL14M"/>
    <property type="match status" value="1"/>
</dbReference>
<dbReference type="Pfam" id="PF00238">
    <property type="entry name" value="Ribosomal_L14"/>
    <property type="match status" value="1"/>
</dbReference>
<dbReference type="SMART" id="SM01374">
    <property type="entry name" value="Ribosomal_L14"/>
    <property type="match status" value="1"/>
</dbReference>
<dbReference type="SUPFAM" id="SSF50193">
    <property type="entry name" value="Ribosomal protein L14"/>
    <property type="match status" value="1"/>
</dbReference>
<dbReference type="PROSITE" id="PS00049">
    <property type="entry name" value="RIBOSOMAL_L14"/>
    <property type="match status" value="1"/>
</dbReference>
<accession>C1A6R5</accession>
<feature type="chain" id="PRO_1000214980" description="Large ribosomal subunit protein uL14">
    <location>
        <begin position="1"/>
        <end position="122"/>
    </location>
</feature>